<protein>
    <recommendedName>
        <fullName evidence="1">tRNA dimethylallyltransferase</fullName>
        <ecNumber evidence="1">2.5.1.75</ecNumber>
    </recommendedName>
    <alternativeName>
        <fullName evidence="1">Dimethylallyl diphosphate:tRNA dimethylallyltransferase</fullName>
        <shortName evidence="1">DMAPP:tRNA dimethylallyltransferase</shortName>
        <shortName evidence="1">DMATase</shortName>
    </alternativeName>
    <alternativeName>
        <fullName evidence="1">Isopentenyl-diphosphate:tRNA isopentenyltransferase</fullName>
        <shortName evidence="1">IPP transferase</shortName>
        <shortName evidence="1">IPPT</shortName>
        <shortName evidence="1">IPTase</shortName>
    </alternativeName>
</protein>
<gene>
    <name evidence="1" type="primary">miaA</name>
    <name type="ordered locus">Abu_0152</name>
</gene>
<organism>
    <name type="scientific">Aliarcobacter butzleri (strain RM4018)</name>
    <name type="common">Arcobacter butzleri</name>
    <dbReference type="NCBI Taxonomy" id="367737"/>
    <lineage>
        <taxon>Bacteria</taxon>
        <taxon>Pseudomonadati</taxon>
        <taxon>Campylobacterota</taxon>
        <taxon>Epsilonproteobacteria</taxon>
        <taxon>Campylobacterales</taxon>
        <taxon>Arcobacteraceae</taxon>
        <taxon>Aliarcobacter</taxon>
    </lineage>
</organism>
<reference key="1">
    <citation type="journal article" date="2007" name="PLoS ONE">
        <title>The complete genome sequence and analysis of the Epsilonproteobacterium Arcobacter butzleri.</title>
        <authorList>
            <person name="Miller W.G."/>
            <person name="Parker C.T."/>
            <person name="Rubenfield M."/>
            <person name="Mendz G.L."/>
            <person name="Woesten M.M.S.M."/>
            <person name="Ussery D.W."/>
            <person name="Stolz J.F."/>
            <person name="Binnewies T.T."/>
            <person name="Hallin P.F."/>
            <person name="Wang G."/>
            <person name="Malek J.A."/>
            <person name="Rogosin A."/>
            <person name="Stanker L.H."/>
            <person name="Mandrell R.E."/>
        </authorList>
    </citation>
    <scope>NUCLEOTIDE SEQUENCE [LARGE SCALE GENOMIC DNA]</scope>
    <source>
        <strain>RM4018</strain>
    </source>
</reference>
<comment type="function">
    <text evidence="1">Catalyzes the transfer of a dimethylallyl group onto the adenine at position 37 in tRNAs that read codons beginning with uridine, leading to the formation of N6-(dimethylallyl)adenosine (i(6)A).</text>
</comment>
<comment type="catalytic activity">
    <reaction evidence="1">
        <text>adenosine(37) in tRNA + dimethylallyl diphosphate = N(6)-dimethylallyladenosine(37) in tRNA + diphosphate</text>
        <dbReference type="Rhea" id="RHEA:26482"/>
        <dbReference type="Rhea" id="RHEA-COMP:10162"/>
        <dbReference type="Rhea" id="RHEA-COMP:10375"/>
        <dbReference type="ChEBI" id="CHEBI:33019"/>
        <dbReference type="ChEBI" id="CHEBI:57623"/>
        <dbReference type="ChEBI" id="CHEBI:74411"/>
        <dbReference type="ChEBI" id="CHEBI:74415"/>
        <dbReference type="EC" id="2.5.1.75"/>
    </reaction>
</comment>
<comment type="cofactor">
    <cofactor evidence="1">
        <name>Mg(2+)</name>
        <dbReference type="ChEBI" id="CHEBI:18420"/>
    </cofactor>
</comment>
<comment type="subunit">
    <text evidence="1">Monomer.</text>
</comment>
<comment type="similarity">
    <text evidence="1">Belongs to the IPP transferase family.</text>
</comment>
<name>MIAA_ALIB4</name>
<evidence type="ECO:0000255" key="1">
    <source>
        <dbReference type="HAMAP-Rule" id="MF_00185"/>
    </source>
</evidence>
<proteinExistence type="inferred from homology"/>
<keyword id="KW-0067">ATP-binding</keyword>
<keyword id="KW-0460">Magnesium</keyword>
<keyword id="KW-0547">Nucleotide-binding</keyword>
<keyword id="KW-1185">Reference proteome</keyword>
<keyword id="KW-0808">Transferase</keyword>
<keyword id="KW-0819">tRNA processing</keyword>
<accession>A8ER62</accession>
<sequence>MKEIAIIGSTASGKTALSLEIASKTNSIILSLDSLCVYKEIDIVSAKPTLEERGEILHFGIDEVYPNVEFDVVCFMELYKKAKEYALKNDKNLIIVGGTGFYLKALIDGLSLGIESKIKLDISVSEAYDLLYSLDEMYMKKIEKNDKYRVEKAYAIYKQTGLTPTLYFEKNPKIPLAKDLKIFEILWEKEDLKKRVASRTNTMIKSGLIDEIIYLEKKYTRAPNCMSSIGIVETFEYLDGKLSKEELEEKISQNTMKLAKRQNTFNKGQFLNKTSNIIDNLNSDILKYFSI</sequence>
<feature type="chain" id="PRO_0000377067" description="tRNA dimethylallyltransferase">
    <location>
        <begin position="1"/>
        <end position="291"/>
    </location>
</feature>
<feature type="region of interest" description="Interaction with substrate tRNA" evidence="1">
    <location>
        <begin position="33"/>
        <end position="36"/>
    </location>
</feature>
<feature type="binding site" evidence="1">
    <location>
        <begin position="8"/>
        <end position="15"/>
    </location>
    <ligand>
        <name>ATP</name>
        <dbReference type="ChEBI" id="CHEBI:30616"/>
    </ligand>
</feature>
<feature type="binding site" evidence="1">
    <location>
        <begin position="10"/>
        <end position="15"/>
    </location>
    <ligand>
        <name>substrate</name>
    </ligand>
</feature>
<feature type="site" description="Interaction with substrate tRNA" evidence="1">
    <location>
        <position position="99"/>
    </location>
</feature>
<dbReference type="EC" id="2.5.1.75" evidence="1"/>
<dbReference type="EMBL" id="CP000361">
    <property type="protein sequence ID" value="ABV66436.1"/>
    <property type="molecule type" value="Genomic_DNA"/>
</dbReference>
<dbReference type="RefSeq" id="WP_012012044.1">
    <property type="nucleotide sequence ID" value="NC_009850.1"/>
</dbReference>
<dbReference type="SMR" id="A8ER62"/>
<dbReference type="STRING" id="367737.Abu_0152"/>
<dbReference type="GeneID" id="24303712"/>
<dbReference type="KEGG" id="abu:Abu_0152"/>
<dbReference type="eggNOG" id="COG0324">
    <property type="taxonomic scope" value="Bacteria"/>
</dbReference>
<dbReference type="HOGENOM" id="CLU_032616_0_1_7"/>
<dbReference type="Proteomes" id="UP000001136">
    <property type="component" value="Chromosome"/>
</dbReference>
<dbReference type="GO" id="GO:0005524">
    <property type="term" value="F:ATP binding"/>
    <property type="evidence" value="ECO:0007669"/>
    <property type="project" value="UniProtKB-UniRule"/>
</dbReference>
<dbReference type="GO" id="GO:0052381">
    <property type="term" value="F:tRNA dimethylallyltransferase activity"/>
    <property type="evidence" value="ECO:0007669"/>
    <property type="project" value="UniProtKB-UniRule"/>
</dbReference>
<dbReference type="GO" id="GO:0006400">
    <property type="term" value="P:tRNA modification"/>
    <property type="evidence" value="ECO:0007669"/>
    <property type="project" value="TreeGrafter"/>
</dbReference>
<dbReference type="Gene3D" id="1.10.20.140">
    <property type="match status" value="1"/>
</dbReference>
<dbReference type="Gene3D" id="3.40.50.300">
    <property type="entry name" value="P-loop containing nucleotide triphosphate hydrolases"/>
    <property type="match status" value="1"/>
</dbReference>
<dbReference type="HAMAP" id="MF_00185">
    <property type="entry name" value="IPP_trans"/>
    <property type="match status" value="1"/>
</dbReference>
<dbReference type="InterPro" id="IPR039657">
    <property type="entry name" value="Dimethylallyltransferase"/>
</dbReference>
<dbReference type="InterPro" id="IPR018022">
    <property type="entry name" value="IPT"/>
</dbReference>
<dbReference type="InterPro" id="IPR027417">
    <property type="entry name" value="P-loop_NTPase"/>
</dbReference>
<dbReference type="NCBIfam" id="TIGR00174">
    <property type="entry name" value="miaA"/>
    <property type="match status" value="1"/>
</dbReference>
<dbReference type="PANTHER" id="PTHR11088">
    <property type="entry name" value="TRNA DIMETHYLALLYLTRANSFERASE"/>
    <property type="match status" value="1"/>
</dbReference>
<dbReference type="PANTHER" id="PTHR11088:SF60">
    <property type="entry name" value="TRNA DIMETHYLALLYLTRANSFERASE"/>
    <property type="match status" value="1"/>
</dbReference>
<dbReference type="Pfam" id="PF01715">
    <property type="entry name" value="IPPT"/>
    <property type="match status" value="1"/>
</dbReference>
<dbReference type="SUPFAM" id="SSF52540">
    <property type="entry name" value="P-loop containing nucleoside triphosphate hydrolases"/>
    <property type="match status" value="1"/>
</dbReference>